<protein>
    <recommendedName>
        <fullName>Cell surface glycoprotein MUC18</fullName>
    </recommendedName>
    <alternativeName>
        <fullName>Cell surface glycoprotein P1H12</fullName>
    </alternativeName>
    <alternativeName>
        <fullName>Melanoma cell adhesion molecule</fullName>
    </alternativeName>
    <alternativeName>
        <fullName>Melanoma-associated antigen A32</fullName>
    </alternativeName>
    <alternativeName>
        <fullName>Melanoma-associated antigen MUC18</fullName>
    </alternativeName>
    <alternativeName>
        <fullName>S-endo 1 endothelial-associated antigen</fullName>
    </alternativeName>
    <cdAntigenName>CD146</cdAntigenName>
</protein>
<proteinExistence type="evidence at protein level"/>
<keyword id="KW-0002">3D-structure</keyword>
<keyword id="KW-0025">Alternative splicing</keyword>
<keyword id="KW-0130">Cell adhesion</keyword>
<keyword id="KW-0903">Direct protein sequencing</keyword>
<keyword id="KW-1015">Disulfide bond</keyword>
<keyword id="KW-0325">Glycoprotein</keyword>
<keyword id="KW-0393">Immunoglobulin domain</keyword>
<keyword id="KW-0472">Membrane</keyword>
<keyword id="KW-0597">Phosphoprotein</keyword>
<keyword id="KW-1267">Proteomics identification</keyword>
<keyword id="KW-1185">Reference proteome</keyword>
<keyword id="KW-0677">Repeat</keyword>
<keyword id="KW-0732">Signal</keyword>
<keyword id="KW-0812">Transmembrane</keyword>
<keyword id="KW-1133">Transmembrane helix</keyword>
<gene>
    <name type="primary">MCAM</name>
    <name type="synonym">MUC18</name>
</gene>
<organism>
    <name type="scientific">Homo sapiens</name>
    <name type="common">Human</name>
    <dbReference type="NCBI Taxonomy" id="9606"/>
    <lineage>
        <taxon>Eukaryota</taxon>
        <taxon>Metazoa</taxon>
        <taxon>Chordata</taxon>
        <taxon>Craniata</taxon>
        <taxon>Vertebrata</taxon>
        <taxon>Euteleostomi</taxon>
        <taxon>Mammalia</taxon>
        <taxon>Eutheria</taxon>
        <taxon>Euarchontoglires</taxon>
        <taxon>Primates</taxon>
        <taxon>Haplorrhini</taxon>
        <taxon>Catarrhini</taxon>
        <taxon>Hominidae</taxon>
        <taxon>Homo</taxon>
    </lineage>
</organism>
<name>MUC18_HUMAN</name>
<accession>P43121</accession>
<accession>O95812</accession>
<accession>Q59E86</accession>
<accession>Q6PHR3</accession>
<accession>Q6ZTR2</accession>
<feature type="signal peptide" evidence="6">
    <location>
        <begin position="1"/>
        <end position="23"/>
    </location>
</feature>
<feature type="chain" id="PRO_0000014891" description="Cell surface glycoprotein MUC18">
    <location>
        <begin position="24"/>
        <end position="646"/>
    </location>
</feature>
<feature type="topological domain" description="Extracellular" evidence="2">
    <location>
        <begin position="24"/>
        <end position="559"/>
    </location>
</feature>
<feature type="transmembrane region" description="Helical" evidence="2">
    <location>
        <begin position="560"/>
        <end position="583"/>
    </location>
</feature>
<feature type="topological domain" description="Cytoplasmic" evidence="2">
    <location>
        <begin position="584"/>
        <end position="646"/>
    </location>
</feature>
<feature type="domain" description="Ig-like V-type 1">
    <location>
        <begin position="24"/>
        <end position="129"/>
    </location>
</feature>
<feature type="domain" description="Ig-like V-type 2">
    <location>
        <begin position="139"/>
        <end position="242"/>
    </location>
</feature>
<feature type="domain" description="Ig-like C2-type 1">
    <location>
        <begin position="244"/>
        <end position="330"/>
    </location>
</feature>
<feature type="domain" description="Ig-like C2-type 2">
    <location>
        <begin position="335"/>
        <end position="424"/>
    </location>
</feature>
<feature type="domain" description="Ig-like C2-type 3">
    <location>
        <begin position="430"/>
        <end position="510"/>
    </location>
</feature>
<feature type="region of interest" description="Disordered" evidence="3">
    <location>
        <begin position="278"/>
        <end position="299"/>
    </location>
</feature>
<feature type="region of interest" description="Disordered" evidence="3">
    <location>
        <begin position="525"/>
        <end position="554"/>
    </location>
</feature>
<feature type="region of interest" description="Disordered" evidence="3">
    <location>
        <begin position="620"/>
        <end position="646"/>
    </location>
</feature>
<feature type="compositionally biased region" description="Polar residues" evidence="3">
    <location>
        <begin position="533"/>
        <end position="547"/>
    </location>
</feature>
<feature type="compositionally biased region" description="Basic and acidic residues" evidence="3">
    <location>
        <begin position="629"/>
        <end position="646"/>
    </location>
</feature>
<feature type="modified residue" description="Phosphoserine" evidence="1">
    <location>
        <position position="606"/>
    </location>
</feature>
<feature type="modified residue" description="Phosphoserine" evidence="11 12">
    <location>
        <position position="614"/>
    </location>
</feature>
<feature type="modified residue" description="Phosphoserine" evidence="12">
    <location>
        <position position="628"/>
    </location>
</feature>
<feature type="glycosylation site" description="N-linked (GlcNAc...) asparagine" evidence="2">
    <location>
        <position position="56"/>
    </location>
</feature>
<feature type="glycosylation site" description="N-linked (GlcNAc...) asparagine" evidence="2">
    <location>
        <position position="418"/>
    </location>
</feature>
<feature type="glycosylation site" description="N-linked (GlcNAc...) asparagine" evidence="2">
    <location>
        <position position="449"/>
    </location>
</feature>
<feature type="glycosylation site" description="N-linked (GlcNAc...) asparagine" evidence="5">
    <location>
        <position position="467"/>
    </location>
</feature>
<feature type="glycosylation site" description="N-linked (GlcNAc...) asparagine" evidence="2">
    <location>
        <position position="508"/>
    </location>
</feature>
<feature type="glycosylation site" description="N-linked (GlcNAc...) asparagine" evidence="2">
    <location>
        <position position="518"/>
    </location>
</feature>
<feature type="glycosylation site" description="N-linked (GlcNAc...) asparagine" evidence="2">
    <location>
        <position position="527"/>
    </location>
</feature>
<feature type="glycosylation site" description="N-linked (GlcNAc...) asparagine" evidence="2">
    <location>
        <position position="544"/>
    </location>
</feature>
<feature type="disulfide bond" evidence="10">
    <location>
        <begin position="48"/>
        <end position="116"/>
    </location>
</feature>
<feature type="disulfide bond" evidence="10">
    <location>
        <begin position="161"/>
        <end position="223"/>
    </location>
</feature>
<feature type="disulfide bond" evidence="10">
    <location>
        <begin position="272"/>
        <end position="320"/>
    </location>
</feature>
<feature type="disulfide bond" evidence="10">
    <location>
        <begin position="365"/>
        <end position="407"/>
    </location>
</feature>
<feature type="disulfide bond" evidence="10">
    <location>
        <begin position="452"/>
        <end position="499"/>
    </location>
</feature>
<feature type="splice variant" id="VSP_016938" description="In isoform 2." evidence="9">
    <original>MGLPRLVCAFLLAACCCCPRVAGVPGEAEQPAPELVEVEVGSTALLKCGLSQSQGNLSHVDWFSVHKEKRTLIFRVRQGQGQSEPGEYEQRLSLQDRGATLALTQVTPQDERIFLCQGKRPRSQEYRIQLRVYKAPEEPNIQVNPLGIPVNSKEPEEVATCVGRNGYPIPQVIWYKNGRPLKEEKNR</original>
    <variation>MVYIVRQFLLYNVSGSVYLDQLIVLLTAKFSILRIAGSRVHHSPFSGHLDGCSFLSLQHSLHTSLDMSRHENVFLGLTLSSKSAGLKGFQLAFVPGLLQGTGGYLDGPLPTPVDNPRVGLEVGLRLSLPPLPPCPG</variation>
    <location>
        <begin position="1"/>
        <end position="187"/>
    </location>
</feature>
<feature type="splice variant" id="VSP_016939" description="In isoform 2." evidence="9">
    <original>ERKLPEPESRGVVIVAVIVCILVLAVLGAVLYFLYKKGKLPCRRSGKQEITLPPSRKSELVVEVKSDKLPEEMGLLQGSSGDKRAPGDQGEKYIDLRH</original>
    <variation>GKPGLAREQGCARASFLPCPSPESPVQKGE</variation>
    <location>
        <begin position="549"/>
        <end position="646"/>
    </location>
</feature>
<feature type="sequence variant" id="VAR_049915" description="In dbSNP:rs34587557." evidence="8">
    <original>E</original>
    <variation>G</variation>
    <location>
        <position position="89"/>
    </location>
</feature>
<feature type="sequence conflict" description="In Ref. 1 and 2." evidence="10" ref="1 2">
    <original>GLD</original>
    <variation>AWN</variation>
    <location>
        <begin position="322"/>
        <end position="324"/>
    </location>
</feature>
<feature type="sequence conflict" description="In Ref. 1, 2 and 3." evidence="10" ref="1 2 3">
    <original>G</original>
    <variation>D</variation>
    <location>
        <position position="383"/>
    </location>
</feature>
<feature type="sequence conflict" description="In Ref. 1 and 2." evidence="10" ref="1 2">
    <original>NV</original>
    <variation>KL</variation>
    <location>
        <begin position="424"/>
        <end position="425"/>
    </location>
</feature>
<feature type="sequence conflict" description="In Ref. 1 and 2." evidence="10" ref="1 2">
    <original>S</original>
    <variation>T</variation>
    <location>
        <position position="606"/>
    </location>
</feature>
<feature type="strand" evidence="13">
    <location>
        <begin position="343"/>
        <end position="352"/>
    </location>
</feature>
<feature type="strand" evidence="13">
    <location>
        <begin position="361"/>
        <end position="371"/>
    </location>
</feature>
<feature type="strand" evidence="13">
    <location>
        <begin position="374"/>
        <end position="379"/>
    </location>
</feature>
<feature type="strand" evidence="13">
    <location>
        <begin position="382"/>
        <end position="394"/>
    </location>
</feature>
<feature type="helix" evidence="13">
    <location>
        <begin position="399"/>
        <end position="401"/>
    </location>
</feature>
<feature type="strand" evidence="13">
    <location>
        <begin position="403"/>
        <end position="410"/>
    </location>
</feature>
<feature type="strand" evidence="13">
    <location>
        <begin position="418"/>
        <end position="427"/>
    </location>
</feature>
<feature type="strand" evidence="13">
    <location>
        <begin position="429"/>
        <end position="434"/>
    </location>
</feature>
<feature type="strand" evidence="13">
    <location>
        <begin position="436"/>
        <end position="441"/>
    </location>
</feature>
<feature type="strand" evidence="13">
    <location>
        <begin position="447"/>
        <end position="458"/>
    </location>
</feature>
<feature type="strand" evidence="13">
    <location>
        <begin position="461"/>
        <end position="468"/>
    </location>
</feature>
<feature type="strand" evidence="13">
    <location>
        <begin position="471"/>
        <end position="476"/>
    </location>
</feature>
<feature type="strand" evidence="13">
    <location>
        <begin position="479"/>
        <end position="487"/>
    </location>
</feature>
<feature type="helix" evidence="13">
    <location>
        <begin position="490"/>
        <end position="495"/>
    </location>
</feature>
<feature type="strand" evidence="13">
    <location>
        <begin position="497"/>
        <end position="503"/>
    </location>
</feature>
<feature type="strand" evidence="13">
    <location>
        <begin position="506"/>
        <end position="515"/>
    </location>
</feature>
<dbReference type="EMBL" id="M29277">
    <property type="protein sequence ID" value="AAA20824.1"/>
    <property type="molecule type" value="mRNA"/>
</dbReference>
<dbReference type="EMBL" id="M28882">
    <property type="protein sequence ID" value="AAA20922.1"/>
    <property type="molecule type" value="mRNA"/>
</dbReference>
<dbReference type="EMBL" id="X68264">
    <property type="protein sequence ID" value="CAA48332.1"/>
    <property type="molecule type" value="Genomic_DNA"/>
</dbReference>
<dbReference type="EMBL" id="X68265">
    <property type="protein sequence ID" value="CAA48332.1"/>
    <property type="status" value="JOINED"/>
    <property type="molecule type" value="Genomic_DNA"/>
</dbReference>
<dbReference type="EMBL" id="X68266">
    <property type="protein sequence ID" value="CAA48332.1"/>
    <property type="status" value="JOINED"/>
    <property type="molecule type" value="Genomic_DNA"/>
</dbReference>
<dbReference type="EMBL" id="X68267">
    <property type="protein sequence ID" value="CAA48332.1"/>
    <property type="status" value="JOINED"/>
    <property type="molecule type" value="Genomic_DNA"/>
</dbReference>
<dbReference type="EMBL" id="X68268">
    <property type="protein sequence ID" value="CAA48332.1"/>
    <property type="status" value="JOINED"/>
    <property type="molecule type" value="Genomic_DNA"/>
</dbReference>
<dbReference type="EMBL" id="X68270">
    <property type="protein sequence ID" value="CAA48332.1"/>
    <property type="status" value="JOINED"/>
    <property type="molecule type" value="Genomic_DNA"/>
</dbReference>
<dbReference type="EMBL" id="X68271">
    <property type="protein sequence ID" value="CAA48332.1"/>
    <property type="status" value="JOINED"/>
    <property type="molecule type" value="Genomic_DNA"/>
</dbReference>
<dbReference type="EMBL" id="AF089868">
    <property type="protein sequence ID" value="AAD17799.1"/>
    <property type="molecule type" value="mRNA"/>
</dbReference>
<dbReference type="EMBL" id="AK126303">
    <property type="protein sequence ID" value="BAC86520.1"/>
    <property type="molecule type" value="mRNA"/>
</dbReference>
<dbReference type="EMBL" id="AB209925">
    <property type="protein sequence ID" value="BAD93162.1"/>
    <property type="status" value="ALT_INIT"/>
    <property type="molecule type" value="mRNA"/>
</dbReference>
<dbReference type="EMBL" id="BC056418">
    <property type="protein sequence ID" value="AAH56418.1"/>
    <property type="molecule type" value="mRNA"/>
</dbReference>
<dbReference type="CCDS" id="CCDS31690.1">
    <molecule id="P43121-1"/>
</dbReference>
<dbReference type="PIR" id="I38049">
    <property type="entry name" value="I38049"/>
</dbReference>
<dbReference type="RefSeq" id="NP_006491.2">
    <molecule id="P43121-1"/>
    <property type="nucleotide sequence ID" value="NM_006500.3"/>
</dbReference>
<dbReference type="PDB" id="6LYN">
    <property type="method" value="X-ray"/>
    <property type="resolution" value="2.78 A"/>
    <property type="chains" value="C/D=336-519"/>
</dbReference>
<dbReference type="PDBsum" id="6LYN"/>
<dbReference type="SMR" id="P43121"/>
<dbReference type="BioGRID" id="110332">
    <property type="interactions" value="473"/>
</dbReference>
<dbReference type="DIP" id="DIP-52791N"/>
<dbReference type="FunCoup" id="P43121">
    <property type="interactions" value="136"/>
</dbReference>
<dbReference type="IntAct" id="P43121">
    <property type="interactions" value="38"/>
</dbReference>
<dbReference type="MINT" id="P43121"/>
<dbReference type="STRING" id="9606.ENSP00000264036"/>
<dbReference type="ChEMBL" id="CHEMBL3712863"/>
<dbReference type="GuidetoPHARMACOLOGY" id="2988"/>
<dbReference type="TCDB" id="8.A.23.1.64">
    <property type="family name" value="the basigin (basigin) family"/>
</dbReference>
<dbReference type="GlyConnect" id="1104">
    <property type="glycosylation" value="2 N-Linked glycans (2 sites)"/>
</dbReference>
<dbReference type="GlyCosmos" id="P43121">
    <property type="glycosylation" value="8 sites, 1 glycan"/>
</dbReference>
<dbReference type="GlyGen" id="P43121">
    <property type="glycosylation" value="12 sites, 24 N-linked glycans (5 sites), 2 O-linked glycans (3 sites)"/>
</dbReference>
<dbReference type="iPTMnet" id="P43121"/>
<dbReference type="PhosphoSitePlus" id="P43121"/>
<dbReference type="SwissPalm" id="P43121"/>
<dbReference type="BioMuta" id="MCAM"/>
<dbReference type="DMDM" id="85681878"/>
<dbReference type="jPOST" id="P43121"/>
<dbReference type="MassIVE" id="P43121"/>
<dbReference type="PaxDb" id="9606-ENSP00000264036"/>
<dbReference type="PeptideAtlas" id="P43121"/>
<dbReference type="ProteomicsDB" id="55589">
    <molecule id="P43121-1"/>
</dbReference>
<dbReference type="ProteomicsDB" id="55590">
    <molecule id="P43121-2"/>
</dbReference>
<dbReference type="Pumba" id="P43121"/>
<dbReference type="ABCD" id="P43121">
    <property type="antibodies" value="2 sequenced antibodies"/>
</dbReference>
<dbReference type="Antibodypedia" id="2244">
    <property type="antibodies" value="2156 antibodies from 49 providers"/>
</dbReference>
<dbReference type="DNASU" id="4162"/>
<dbReference type="Ensembl" id="ENST00000264036.6">
    <molecule id="P43121-1"/>
    <property type="protein sequence ID" value="ENSP00000264036.4"/>
    <property type="gene ID" value="ENSG00000076706.17"/>
</dbReference>
<dbReference type="GeneID" id="4162"/>
<dbReference type="KEGG" id="hsa:4162"/>
<dbReference type="MANE-Select" id="ENST00000264036.6">
    <property type="protein sequence ID" value="ENSP00000264036.4"/>
    <property type="RefSeq nucleotide sequence ID" value="NM_006500.3"/>
    <property type="RefSeq protein sequence ID" value="NP_006491.2"/>
</dbReference>
<dbReference type="UCSC" id="uc001pwf.4">
    <molecule id="P43121-1"/>
    <property type="organism name" value="human"/>
</dbReference>
<dbReference type="AGR" id="HGNC:6934"/>
<dbReference type="CTD" id="4162"/>
<dbReference type="DisGeNET" id="4162"/>
<dbReference type="GeneCards" id="MCAM"/>
<dbReference type="HGNC" id="HGNC:6934">
    <property type="gene designation" value="MCAM"/>
</dbReference>
<dbReference type="HPA" id="ENSG00000076706">
    <property type="expression patterns" value="Low tissue specificity"/>
</dbReference>
<dbReference type="MIM" id="155735">
    <property type="type" value="gene"/>
</dbReference>
<dbReference type="neXtProt" id="NX_P43121"/>
<dbReference type="OpenTargets" id="ENSG00000076706"/>
<dbReference type="PharmGKB" id="PA30678"/>
<dbReference type="VEuPathDB" id="HostDB:ENSG00000076706"/>
<dbReference type="eggNOG" id="ENOG502QV1U">
    <property type="taxonomic scope" value="Eukaryota"/>
</dbReference>
<dbReference type="GeneTree" id="ENSGT00940000155838"/>
<dbReference type="HOGENOM" id="CLU_028888_3_0_1"/>
<dbReference type="InParanoid" id="P43121"/>
<dbReference type="OMA" id="ANEHMTH"/>
<dbReference type="OrthoDB" id="10010939at2759"/>
<dbReference type="PAN-GO" id="P43121">
    <property type="GO annotations" value="2 GO annotations based on evolutionary models"/>
</dbReference>
<dbReference type="PhylomeDB" id="P43121"/>
<dbReference type="TreeFam" id="TF330534"/>
<dbReference type="PathwayCommons" id="P43121"/>
<dbReference type="Reactome" id="R-HSA-8980692">
    <property type="pathway name" value="RHOA GTPase cycle"/>
</dbReference>
<dbReference type="Reactome" id="R-HSA-9013026">
    <property type="pathway name" value="RHOB GTPase cycle"/>
</dbReference>
<dbReference type="Reactome" id="R-HSA-9013106">
    <property type="pathway name" value="RHOC GTPase cycle"/>
</dbReference>
<dbReference type="Reactome" id="R-HSA-9013149">
    <property type="pathway name" value="RAC1 GTPase cycle"/>
</dbReference>
<dbReference type="Reactome" id="R-HSA-9013404">
    <property type="pathway name" value="RAC2 GTPase cycle"/>
</dbReference>
<dbReference type="Reactome" id="R-HSA-9013405">
    <property type="pathway name" value="RHOD GTPase cycle"/>
</dbReference>
<dbReference type="Reactome" id="R-HSA-9013408">
    <property type="pathway name" value="RHOG GTPase cycle"/>
</dbReference>
<dbReference type="Reactome" id="R-HSA-9013423">
    <property type="pathway name" value="RAC3 GTPase cycle"/>
</dbReference>
<dbReference type="Reactome" id="R-HSA-9035034">
    <property type="pathway name" value="RHOF GTPase cycle"/>
</dbReference>
<dbReference type="SignaLink" id="P43121"/>
<dbReference type="BioGRID-ORCS" id="4162">
    <property type="hits" value="10 hits in 1162 CRISPR screens"/>
</dbReference>
<dbReference type="ChiTaRS" id="MCAM">
    <property type="organism name" value="human"/>
</dbReference>
<dbReference type="GeneWiki" id="CD146"/>
<dbReference type="GenomeRNAi" id="4162"/>
<dbReference type="Pharos" id="P43121">
    <property type="development level" value="Tbio"/>
</dbReference>
<dbReference type="PRO" id="PR:P43121"/>
<dbReference type="Proteomes" id="UP000005640">
    <property type="component" value="Chromosome 11"/>
</dbReference>
<dbReference type="RNAct" id="P43121">
    <property type="molecule type" value="protein"/>
</dbReference>
<dbReference type="Bgee" id="ENSG00000076706">
    <property type="expression patterns" value="Expressed in blood vessel layer and 209 other cell types or tissues"/>
</dbReference>
<dbReference type="ExpressionAtlas" id="P43121">
    <property type="expression patterns" value="baseline and differential"/>
</dbReference>
<dbReference type="GO" id="GO:0009897">
    <property type="term" value="C:external side of plasma membrane"/>
    <property type="evidence" value="ECO:0000314"/>
    <property type="project" value="UniProtKB"/>
</dbReference>
<dbReference type="GO" id="GO:0005576">
    <property type="term" value="C:extracellular region"/>
    <property type="evidence" value="ECO:0007005"/>
    <property type="project" value="BHF-UCL"/>
</dbReference>
<dbReference type="GO" id="GO:0005615">
    <property type="term" value="C:extracellular space"/>
    <property type="evidence" value="ECO:0007669"/>
    <property type="project" value="Ensembl"/>
</dbReference>
<dbReference type="GO" id="GO:0005925">
    <property type="term" value="C:focal adhesion"/>
    <property type="evidence" value="ECO:0007005"/>
    <property type="project" value="UniProtKB"/>
</dbReference>
<dbReference type="GO" id="GO:0005886">
    <property type="term" value="C:plasma membrane"/>
    <property type="evidence" value="ECO:0000318"/>
    <property type="project" value="GO_Central"/>
</dbReference>
<dbReference type="GO" id="GO:0005055">
    <property type="term" value="F:laminin receptor activity"/>
    <property type="evidence" value="ECO:0000318"/>
    <property type="project" value="GO_Central"/>
</dbReference>
<dbReference type="GO" id="GO:0009653">
    <property type="term" value="P:anatomical structure morphogenesis"/>
    <property type="evidence" value="ECO:0000304"/>
    <property type="project" value="ProtInc"/>
</dbReference>
<dbReference type="GO" id="GO:0001525">
    <property type="term" value="P:angiogenesis"/>
    <property type="evidence" value="ECO:0000314"/>
    <property type="project" value="MGI"/>
</dbReference>
<dbReference type="GO" id="GO:0007155">
    <property type="term" value="P:cell adhesion"/>
    <property type="evidence" value="ECO:0000304"/>
    <property type="project" value="ProtInc"/>
</dbReference>
<dbReference type="GO" id="GO:0003094">
    <property type="term" value="P:glomerular filtration"/>
    <property type="evidence" value="ECO:0000270"/>
    <property type="project" value="UniProtKB"/>
</dbReference>
<dbReference type="GO" id="GO:0030335">
    <property type="term" value="P:positive regulation of cell migration"/>
    <property type="evidence" value="ECO:0007669"/>
    <property type="project" value="Ensembl"/>
</dbReference>
<dbReference type="GO" id="GO:0061042">
    <property type="term" value="P:vascular wound healing"/>
    <property type="evidence" value="ECO:0000270"/>
    <property type="project" value="UniProtKB"/>
</dbReference>
<dbReference type="CDD" id="cd00096">
    <property type="entry name" value="Ig"/>
    <property type="match status" value="1"/>
</dbReference>
<dbReference type="FunFam" id="2.60.40.10:FF:001086">
    <property type="entry name" value="Cell surface glycoprotein MUC18"/>
    <property type="match status" value="1"/>
</dbReference>
<dbReference type="FunFam" id="2.60.40.10:FF:001094">
    <property type="entry name" value="Cell surface glycoprotein MUC18"/>
    <property type="match status" value="1"/>
</dbReference>
<dbReference type="FunFam" id="2.60.40.10:FF:001225">
    <property type="entry name" value="Cell surface glycoprotein MUC18"/>
    <property type="match status" value="1"/>
</dbReference>
<dbReference type="FunFam" id="2.60.40.10:FF:001303">
    <property type="entry name" value="Cell surface glycoprotein MUC18"/>
    <property type="match status" value="1"/>
</dbReference>
<dbReference type="FunFam" id="2.60.40.10:FF:001324">
    <property type="entry name" value="Cell surface glycoprotein MUC18"/>
    <property type="match status" value="1"/>
</dbReference>
<dbReference type="Gene3D" id="2.60.40.10">
    <property type="entry name" value="Immunoglobulins"/>
    <property type="match status" value="5"/>
</dbReference>
<dbReference type="InterPro" id="IPR013162">
    <property type="entry name" value="CD80_C2-set"/>
</dbReference>
<dbReference type="InterPro" id="IPR007110">
    <property type="entry name" value="Ig-like_dom"/>
</dbReference>
<dbReference type="InterPro" id="IPR036179">
    <property type="entry name" value="Ig-like_dom_sf"/>
</dbReference>
<dbReference type="InterPro" id="IPR013783">
    <property type="entry name" value="Ig-like_fold"/>
</dbReference>
<dbReference type="InterPro" id="IPR003599">
    <property type="entry name" value="Ig_sub"/>
</dbReference>
<dbReference type="InterPro" id="IPR003598">
    <property type="entry name" value="Ig_sub2"/>
</dbReference>
<dbReference type="InterPro" id="IPR013106">
    <property type="entry name" value="Ig_V-set"/>
</dbReference>
<dbReference type="InterPro" id="IPR051116">
    <property type="entry name" value="Surface_Rcpt/Adhesion_Mol"/>
</dbReference>
<dbReference type="PANTHER" id="PTHR11973:SF18">
    <property type="entry name" value="CELL SURFACE GLYCOPROTEIN MUC18"/>
    <property type="match status" value="1"/>
</dbReference>
<dbReference type="PANTHER" id="PTHR11973">
    <property type="entry name" value="CELL SURFACE GLYCOPROTEIN MUC18-RELATED"/>
    <property type="match status" value="1"/>
</dbReference>
<dbReference type="Pfam" id="PF08205">
    <property type="entry name" value="C2-set_2"/>
    <property type="match status" value="1"/>
</dbReference>
<dbReference type="Pfam" id="PF13927">
    <property type="entry name" value="Ig_3"/>
    <property type="match status" value="3"/>
</dbReference>
<dbReference type="Pfam" id="PF07686">
    <property type="entry name" value="V-set"/>
    <property type="match status" value="1"/>
</dbReference>
<dbReference type="SMART" id="SM00409">
    <property type="entry name" value="IG"/>
    <property type="match status" value="5"/>
</dbReference>
<dbReference type="SMART" id="SM00408">
    <property type="entry name" value="IGc2"/>
    <property type="match status" value="3"/>
</dbReference>
<dbReference type="SUPFAM" id="SSF48726">
    <property type="entry name" value="Immunoglobulin"/>
    <property type="match status" value="5"/>
</dbReference>
<dbReference type="PROSITE" id="PS50835">
    <property type="entry name" value="IG_LIKE"/>
    <property type="match status" value="5"/>
</dbReference>
<reference key="1">
    <citation type="journal article" date="1989" name="Proc. Natl. Acad. Sci. U.S.A.">
        <title>MUC18, a marker of tumor progression in human melanoma, shows sequence similarity to the neural cell adhesion molecules of the immunoglobulin superfamily.</title>
        <authorList>
            <person name="Lehmann J.M."/>
            <person name="Riethmueller G."/>
            <person name="Johnson J.P."/>
        </authorList>
    </citation>
    <scope>NUCLEOTIDE SEQUENCE [MRNA] (ISOFORM 1)</scope>
    <source>
        <tissue>Melanoma</tissue>
    </source>
</reference>
<reference key="2">
    <citation type="journal article" date="1993" name="Proc. Natl. Acad. Sci. U.S.A.">
        <title>Genomic organization of the melanoma-associated glycoprotein MUC18: implications for the evolution of the immunoglobulin domains.</title>
        <authorList>
            <person name="Sers C."/>
            <person name="Kirsch K."/>
            <person name="Rothbaecher U."/>
            <person name="Riethmueller G."/>
            <person name="Johnson J.P."/>
        </authorList>
    </citation>
    <scope>NUCLEOTIDE SEQUENCE [GENOMIC DNA / MRNA] (ISOFORM 1)</scope>
    <scope>SEQUENCE REVISION</scope>
    <source>
        <tissue>Melanoma</tissue>
    </source>
</reference>
<reference key="3">
    <citation type="journal article" date="2001" name="J. Lab. Clin. Med.">
        <title>Identification and functional assessment of endothelial P1H12.</title>
        <authorList>
            <person name="Solovey A.N."/>
            <person name="Gui L."/>
            <person name="Chang L."/>
            <person name="Enenstein J."/>
            <person name="Browne P.V."/>
            <person name="Hebbel R.P."/>
        </authorList>
    </citation>
    <scope>NUCLEOTIDE SEQUENCE [MRNA] (ISOFORM 1)</scope>
</reference>
<reference key="4">
    <citation type="journal article" date="2004" name="Nat. Genet.">
        <title>Complete sequencing and characterization of 21,243 full-length human cDNAs.</title>
        <authorList>
            <person name="Ota T."/>
            <person name="Suzuki Y."/>
            <person name="Nishikawa T."/>
            <person name="Otsuki T."/>
            <person name="Sugiyama T."/>
            <person name="Irie R."/>
            <person name="Wakamatsu A."/>
            <person name="Hayashi K."/>
            <person name="Sato H."/>
            <person name="Nagai K."/>
            <person name="Kimura K."/>
            <person name="Makita H."/>
            <person name="Sekine M."/>
            <person name="Obayashi M."/>
            <person name="Nishi T."/>
            <person name="Shibahara T."/>
            <person name="Tanaka T."/>
            <person name="Ishii S."/>
            <person name="Yamamoto J."/>
            <person name="Saito K."/>
            <person name="Kawai Y."/>
            <person name="Isono Y."/>
            <person name="Nakamura Y."/>
            <person name="Nagahari K."/>
            <person name="Murakami K."/>
            <person name="Yasuda T."/>
            <person name="Iwayanagi T."/>
            <person name="Wagatsuma M."/>
            <person name="Shiratori A."/>
            <person name="Sudo H."/>
            <person name="Hosoiri T."/>
            <person name="Kaku Y."/>
            <person name="Kodaira H."/>
            <person name="Kondo H."/>
            <person name="Sugawara M."/>
            <person name="Takahashi M."/>
            <person name="Kanda K."/>
            <person name="Yokoi T."/>
            <person name="Furuya T."/>
            <person name="Kikkawa E."/>
            <person name="Omura Y."/>
            <person name="Abe K."/>
            <person name="Kamihara K."/>
            <person name="Katsuta N."/>
            <person name="Sato K."/>
            <person name="Tanikawa M."/>
            <person name="Yamazaki M."/>
            <person name="Ninomiya K."/>
            <person name="Ishibashi T."/>
            <person name="Yamashita H."/>
            <person name="Murakawa K."/>
            <person name="Fujimori K."/>
            <person name="Tanai H."/>
            <person name="Kimata M."/>
            <person name="Watanabe M."/>
            <person name="Hiraoka S."/>
            <person name="Chiba Y."/>
            <person name="Ishida S."/>
            <person name="Ono Y."/>
            <person name="Takiguchi S."/>
            <person name="Watanabe S."/>
            <person name="Yosida M."/>
            <person name="Hotuta T."/>
            <person name="Kusano J."/>
            <person name="Kanehori K."/>
            <person name="Takahashi-Fujii A."/>
            <person name="Hara H."/>
            <person name="Tanase T.-O."/>
            <person name="Nomura Y."/>
            <person name="Togiya S."/>
            <person name="Komai F."/>
            <person name="Hara R."/>
            <person name="Takeuchi K."/>
            <person name="Arita M."/>
            <person name="Imose N."/>
            <person name="Musashino K."/>
            <person name="Yuuki H."/>
            <person name="Oshima A."/>
            <person name="Sasaki N."/>
            <person name="Aotsuka S."/>
            <person name="Yoshikawa Y."/>
            <person name="Matsunawa H."/>
            <person name="Ichihara T."/>
            <person name="Shiohata N."/>
            <person name="Sano S."/>
            <person name="Moriya S."/>
            <person name="Momiyama H."/>
            <person name="Satoh N."/>
            <person name="Takami S."/>
            <person name="Terashima Y."/>
            <person name="Suzuki O."/>
            <person name="Nakagawa S."/>
            <person name="Senoh A."/>
            <person name="Mizoguchi H."/>
            <person name="Goto Y."/>
            <person name="Shimizu F."/>
            <person name="Wakebe H."/>
            <person name="Hishigaki H."/>
            <person name="Watanabe T."/>
            <person name="Sugiyama A."/>
            <person name="Takemoto M."/>
            <person name="Kawakami B."/>
            <person name="Yamazaki M."/>
            <person name="Watanabe K."/>
            <person name="Kumagai A."/>
            <person name="Itakura S."/>
            <person name="Fukuzumi Y."/>
            <person name="Fujimori Y."/>
            <person name="Komiyama M."/>
            <person name="Tashiro H."/>
            <person name="Tanigami A."/>
            <person name="Fujiwara T."/>
            <person name="Ono T."/>
            <person name="Yamada K."/>
            <person name="Fujii Y."/>
            <person name="Ozaki K."/>
            <person name="Hirao M."/>
            <person name="Ohmori Y."/>
            <person name="Kawabata A."/>
            <person name="Hikiji T."/>
            <person name="Kobatake N."/>
            <person name="Inagaki H."/>
            <person name="Ikema Y."/>
            <person name="Okamoto S."/>
            <person name="Okitani R."/>
            <person name="Kawakami T."/>
            <person name="Noguchi S."/>
            <person name="Itoh T."/>
            <person name="Shigeta K."/>
            <person name="Senba T."/>
            <person name="Matsumura K."/>
            <person name="Nakajima Y."/>
            <person name="Mizuno T."/>
            <person name="Morinaga M."/>
            <person name="Sasaki M."/>
            <person name="Togashi T."/>
            <person name="Oyama M."/>
            <person name="Hata H."/>
            <person name="Watanabe M."/>
            <person name="Komatsu T."/>
            <person name="Mizushima-Sugano J."/>
            <person name="Satoh T."/>
            <person name="Shirai Y."/>
            <person name="Takahashi Y."/>
            <person name="Nakagawa K."/>
            <person name="Okumura K."/>
            <person name="Nagase T."/>
            <person name="Nomura N."/>
            <person name="Kikuchi H."/>
            <person name="Masuho Y."/>
            <person name="Yamashita R."/>
            <person name="Nakai K."/>
            <person name="Yada T."/>
            <person name="Nakamura Y."/>
            <person name="Ohara O."/>
            <person name="Isogai T."/>
            <person name="Sugano S."/>
        </authorList>
    </citation>
    <scope>NUCLEOTIDE SEQUENCE [LARGE SCALE MRNA] (ISOFORM 2)</scope>
    <source>
        <tissue>Trachea</tissue>
    </source>
</reference>
<reference key="5">
    <citation type="submission" date="2005-03" db="EMBL/GenBank/DDBJ databases">
        <authorList>
            <person name="Totoki Y."/>
            <person name="Toyoda A."/>
            <person name="Takeda T."/>
            <person name="Sakaki Y."/>
            <person name="Tanaka A."/>
            <person name="Yokoyama S."/>
            <person name="Ohara O."/>
            <person name="Nagase T."/>
            <person name="Kikuno R.F."/>
        </authorList>
    </citation>
    <scope>NUCLEOTIDE SEQUENCE [LARGE SCALE MRNA] (ISOFORM 1)</scope>
    <scope>VARIANT GLY-89</scope>
    <source>
        <tissue>Aortic endothelium</tissue>
    </source>
</reference>
<reference key="6">
    <citation type="journal article" date="2004" name="Genome Res.">
        <title>The status, quality, and expansion of the NIH full-length cDNA project: the Mammalian Gene Collection (MGC).</title>
        <authorList>
            <consortium name="The MGC Project Team"/>
        </authorList>
    </citation>
    <scope>NUCLEOTIDE SEQUENCE [LARGE SCALE MRNA] (ISOFORM 1)</scope>
    <source>
        <tissue>PNS</tissue>
    </source>
</reference>
<reference key="7">
    <citation type="journal article" date="1994" name="Cancer Res.">
        <title>Isolation and functional characterization of the A32 melanoma-associated antigen.</title>
        <authorList>
            <person name="Shih I.-M."/>
            <person name="Eleder D.E."/>
            <person name="Speicher D."/>
            <person name="Johnson J.P."/>
            <person name="Herlyn M."/>
        </authorList>
    </citation>
    <scope>PROTEIN SEQUENCE OF 24-44; 98-112; 135-153; 240-260; 379-389 AND 460-478</scope>
</reference>
<reference key="8">
    <citation type="journal article" date="1996" name="Biochem. Biophys. Res. Commun.">
        <title>Identification of the S-endo 1 endothelial-associated antigen.</title>
        <authorList>
            <person name="Bardin N."/>
            <person name="Frances V."/>
            <person name="Lesaule G."/>
            <person name="Horschowski N."/>
            <person name="George F."/>
            <person name="Sampol J."/>
        </authorList>
    </citation>
    <scope>PROTEIN SEQUENCE OF 27-40; 98-112 AND 236-260</scope>
</reference>
<reference key="9">
    <citation type="journal article" date="1993" name="Melanoma Res.">
        <title>The progression associated antigen MUC18: a unique member of the immunoglobulin supergene family.</title>
        <authorList>
            <person name="Johnson J.P."/>
            <person name="Rothbacher U."/>
            <person name="Sers C."/>
        </authorList>
    </citation>
    <scope>FUNCTION</scope>
</reference>
<reference key="10">
    <citation type="journal article" date="2001" name="J. Biol. Chem.">
        <title>Outside-in signaling pathway linked to CD146 engagement in human endothelial cells.</title>
        <authorList>
            <person name="Anfosso F."/>
            <person name="Bardin N."/>
            <person name="Vivier E."/>
            <person name="Sabatier F."/>
            <person name="Sampol J."/>
            <person name="Dignat-George F."/>
        </authorList>
    </citation>
    <scope>FUNCTION</scope>
</reference>
<reference key="11">
    <citation type="journal article" date="2008" name="Proc. Natl. Acad. Sci. U.S.A.">
        <title>A quantitative atlas of mitotic phosphorylation.</title>
        <authorList>
            <person name="Dephoure N."/>
            <person name="Zhou C."/>
            <person name="Villen J."/>
            <person name="Beausoleil S.A."/>
            <person name="Bakalarski C.E."/>
            <person name="Elledge S.J."/>
            <person name="Gygi S.P."/>
        </authorList>
    </citation>
    <scope>PHOSPHORYLATION [LARGE SCALE ANALYSIS] AT SER-614</scope>
    <scope>IDENTIFICATION BY MASS SPECTROMETRY [LARGE SCALE ANALYSIS]</scope>
    <source>
        <tissue>Cervix carcinoma</tissue>
    </source>
</reference>
<reference key="12">
    <citation type="journal article" date="2009" name="J. Proteome Res.">
        <title>Glycoproteomics analysis of human liver tissue by combination of multiple enzyme digestion and hydrazide chemistry.</title>
        <authorList>
            <person name="Chen R."/>
            <person name="Jiang X."/>
            <person name="Sun D."/>
            <person name="Han G."/>
            <person name="Wang F."/>
            <person name="Ye M."/>
            <person name="Wang L."/>
            <person name="Zou H."/>
        </authorList>
    </citation>
    <scope>GLYCOSYLATION [LARGE SCALE ANALYSIS] AT ASN-467</scope>
    <source>
        <tissue>Liver</tissue>
    </source>
</reference>
<reference key="13">
    <citation type="journal article" date="2010" name="Sci. Signal.">
        <title>Quantitative phosphoproteomics reveals widespread full phosphorylation site occupancy during mitosis.</title>
        <authorList>
            <person name="Olsen J.V."/>
            <person name="Vermeulen M."/>
            <person name="Santamaria A."/>
            <person name="Kumar C."/>
            <person name="Miller M.L."/>
            <person name="Jensen L.J."/>
            <person name="Gnad F."/>
            <person name="Cox J."/>
            <person name="Jensen T.S."/>
            <person name="Nigg E.A."/>
            <person name="Brunak S."/>
            <person name="Mann M."/>
        </authorList>
    </citation>
    <scope>PHOSPHORYLATION [LARGE SCALE ANALYSIS] AT SER-614 AND SER-628</scope>
    <scope>IDENTIFICATION BY MASS SPECTROMETRY [LARGE SCALE ANALYSIS]</scope>
    <source>
        <tissue>Cervix carcinoma</tissue>
    </source>
</reference>
<reference key="14">
    <citation type="journal article" date="2011" name="BMC Syst. Biol.">
        <title>Initial characterization of the human central proteome.</title>
        <authorList>
            <person name="Burkard T.R."/>
            <person name="Planyavsky M."/>
            <person name="Kaupe I."/>
            <person name="Breitwieser F.P."/>
            <person name="Buerckstuemmer T."/>
            <person name="Bennett K.L."/>
            <person name="Superti-Furga G."/>
            <person name="Colinge J."/>
        </authorList>
    </citation>
    <scope>IDENTIFICATION BY MASS SPECTROMETRY [LARGE SCALE ANALYSIS]</scope>
</reference>
<evidence type="ECO:0000250" key="1">
    <source>
        <dbReference type="UniProtKB" id="Q8R2Y2"/>
    </source>
</evidence>
<evidence type="ECO:0000255" key="2"/>
<evidence type="ECO:0000256" key="3">
    <source>
        <dbReference type="SAM" id="MobiDB-lite"/>
    </source>
</evidence>
<evidence type="ECO:0000269" key="4">
    <source>
    </source>
</evidence>
<evidence type="ECO:0000269" key="5">
    <source>
    </source>
</evidence>
<evidence type="ECO:0000269" key="6">
    <source>
    </source>
</evidence>
<evidence type="ECO:0000269" key="7">
    <source>
    </source>
</evidence>
<evidence type="ECO:0000269" key="8">
    <source ref="5"/>
</evidence>
<evidence type="ECO:0000303" key="9">
    <source>
    </source>
</evidence>
<evidence type="ECO:0000305" key="10"/>
<evidence type="ECO:0007744" key="11">
    <source>
    </source>
</evidence>
<evidence type="ECO:0007744" key="12">
    <source>
    </source>
</evidence>
<evidence type="ECO:0007829" key="13">
    <source>
        <dbReference type="PDB" id="6LYN"/>
    </source>
</evidence>
<comment type="function">
    <text evidence="4 7">Plays a role in cell adhesion, and in cohesion of the endothelial monolayer at intercellular junctions in vascular tissue. Its expression may allow melanoma cells to interact with cellular elements of the vascular system, thereby enhancing hematogeneous tumor spread. Could be an adhesion molecule active in neural crest cells during embryonic development. Acts as a surface receptor that triggers tyrosine phosphorylation of FYN and PTK2/FAK1, and a transient increase in the intracellular calcium concentration.</text>
</comment>
<comment type="interaction">
    <interactant intactId="EBI-2339969">
        <id>P43121</id>
    </interactant>
    <interactant intactId="EBI-9090702">
        <id>Q10981</id>
        <label>FUT2</label>
    </interactant>
    <organismsDiffer>false</organismsDiffer>
    <experiments>2</experiments>
</comment>
<comment type="subcellular location">
    <subcellularLocation>
        <location>Membrane</location>
        <topology>Single-pass type I membrane protein</topology>
    </subcellularLocation>
</comment>
<comment type="alternative products">
    <event type="alternative splicing"/>
    <isoform>
        <id>P43121-1</id>
        <name>1</name>
        <sequence type="displayed"/>
    </isoform>
    <isoform>
        <id>P43121-2</id>
        <name>2</name>
        <sequence type="described" ref="VSP_016938 VSP_016939"/>
    </isoform>
</comment>
<comment type="tissue specificity">
    <text>Detected in endothelial cells in vascular tissue throughout the body. May appear at the surface of neural crest cells during their embryonic migration. Appears to be limited to vascular smooth muscle in normal adult tissues. Associated with tumor progression and the development of metastasis in human malignant melanoma. Expressed most strongly on metastatic lesions and advanced primary tumors and is only rarely detected in benign melanocytic nevi and thin primary melanomas with a low probability of metastasis.</text>
</comment>
<comment type="sequence caution" evidence="10">
    <conflict type="erroneous initiation">
        <sequence resource="EMBL-CDS" id="BAD93162"/>
    </conflict>
</comment>
<comment type="online information" name="Atlas of Genetics and Cytogenetics in Oncology and Haematology">
    <link uri="https://atlasgeneticsoncology.org/gene/41314/MCAM"/>
</comment>
<sequence>MGLPRLVCAFLLAACCCCPRVAGVPGEAEQPAPELVEVEVGSTALLKCGLSQSQGNLSHVDWFSVHKEKRTLIFRVRQGQGQSEPGEYEQRLSLQDRGATLALTQVTPQDERIFLCQGKRPRSQEYRIQLRVYKAPEEPNIQVNPLGIPVNSKEPEEVATCVGRNGYPIPQVIWYKNGRPLKEEKNRVHIQSSQTVESSGLYTLQSILKAQLVKEDKDAQFYCELNYRLPSGNHMKESREVTVPVFYPTEKVWLEVEPVGMLKEGDRVEIRCLADGNPPPHFSISKQNPSTREAEEETTNDNGVLVLEPARKEHSGRYECQGLDLDTMISLLSEPQELLVNYVSDVRVSPAAPERQEGSSLTLTCEAESSQDLEFQWLREETGQVLERGPVLQLHDLKREAGGGYRCVASVPSIPGLNRTQLVNVAIFGPPWMAFKERKVWVKENMVLNLSCEASGHPRPTISWNVNGTASEQDQDPQRVLSTLNVLVTPELLETGVECTASNDLGKNTSILFLELVNLTTLTPDSNTTTGLSTSTASPHTRANSTSTERKLPEPESRGVVIVAVIVCILVLAVLGAVLYFLYKKGKLPCRRSGKQEITLPPSRKSELVVEVKSDKLPEEMGLLQGSSGDKRAPGDQGEKYIDLRH</sequence>